<evidence type="ECO:0000250" key="1">
    <source>
        <dbReference type="UniProtKB" id="A0A0D1E3S6"/>
    </source>
</evidence>
<evidence type="ECO:0000269" key="2">
    <source>
    </source>
</evidence>
<evidence type="ECO:0000269" key="3">
    <source>
    </source>
</evidence>
<evidence type="ECO:0000269" key="4">
    <source>
    </source>
</evidence>
<evidence type="ECO:0000269" key="5">
    <source>
    </source>
</evidence>
<evidence type="ECO:0000269" key="6">
    <source>
    </source>
</evidence>
<evidence type="ECO:0000269" key="7">
    <source>
    </source>
</evidence>
<evidence type="ECO:0000269" key="8">
    <source ref="6"/>
</evidence>
<evidence type="ECO:0000303" key="9">
    <source>
    </source>
</evidence>
<evidence type="ECO:0000303" key="10">
    <source>
    </source>
</evidence>
<evidence type="ECO:0000305" key="11"/>
<evidence type="ECO:0000305" key="12">
    <source>
    </source>
</evidence>
<evidence type="ECO:0000305" key="13">
    <source>
    </source>
</evidence>
<sequence>MSAQNGYEWQQTERDVWTRTCLGHEAAASFNENIAYGHTELSVTATFRVHHPASSGIAGTDQEQEDLVARVRDAWIRTRYLRPEVAVEMTTHTDASIPQAFTYRVLRDEVSLRRWVDQTMAVVRLGEPGAESLEEVCAYTYNRALPTPGKQSMLYLVLPRLADEKDRNAHFVWNVSHALADGGSISELYNVLLQAMIDASPSTDGSVYIPSDQELDVLPLLPRSVVAAYRQQHKPSAADEEAAAETARDNLRLIQAKMNESLALQPVTNWTTRKHETICIRRDIEADEARELIKFGKHIKSGVTYLASAATVLATAETFPERKASSTGALMGMVRNARRWLSTEPVEGATGNRTPLGSDAVFLWIPVDTQKSLEPSFDGVPELVSVAARIRSELNKHLVSPHCISSYPVVAEFAQGALTNHWAEIEGANRSAHTPNAEELSKIIGPQAPGFSSVGALQVHSRFEPASPSARASGLWLERTDSAHRGRQVNASPWISMLMIDGKIKLQLGFDAKFHDADKMEQWMQRTYEWLLVCAAAASSSVGTVAPISARL</sequence>
<reference key="1">
    <citation type="journal article" date="2013" name="Genome Announc.">
        <title>Genome sequence of the basidiomycetous yeast Pseudozyma antarctica T-34, a producer of the glycolipid biosurfactants mannosylerythritol lipids.</title>
        <authorList>
            <person name="Morita T."/>
            <person name="Koike H."/>
            <person name="Koyama Y."/>
            <person name="Hagiwara H."/>
            <person name="Ito E."/>
            <person name="Fukuoka T."/>
            <person name="Imura T."/>
            <person name="Machida M."/>
            <person name="Kitamoto D."/>
        </authorList>
    </citation>
    <scope>NUCLEOTIDE SEQUENCE [LARGE SCALE GENOMIC DNA]</scope>
    <scope>IDENTIFICATION</scope>
    <scope>FUNCTION</scope>
    <source>
        <strain>T-34</strain>
    </source>
</reference>
<reference key="2">
    <citation type="journal article" date="2002" name="J. Biosci. Bioeng.">
        <title>Functions and potential applications of glycolipid biosurfactants--from energy-saving materials to gene delivery carriers.</title>
        <authorList>
            <person name="Kitamoto D."/>
            <person name="Isoda H."/>
            <person name="Nakahara T."/>
        </authorList>
    </citation>
    <scope>BIOTECHNOLOGY</scope>
</reference>
<reference key="3">
    <citation type="journal article" date="2007" name="Colloids Surf. B Biointerfaces">
        <title>Kinetic studies on the interactions between glycolipid biosurfactant assembled monolayers and various classes of immunoglobulins using surface plasmon resonance.</title>
        <authorList>
            <person name="Ito S."/>
            <person name="Imura T."/>
            <person name="Fukuoka T."/>
            <person name="Morita T."/>
            <person name="Sakai H."/>
            <person name="Abe M."/>
            <person name="Kitamoto D."/>
        </authorList>
    </citation>
    <scope>BIOTECHNOLOGY</scope>
</reference>
<reference key="4">
    <citation type="journal article" date="2007" name="Langmuir">
        <title>Aqueous-phase behavior of natural glycolipid biosurfactant mannosylerythritol lipid A: sponge, cubic, and lamellar phases.</title>
        <authorList>
            <person name="Imura T."/>
            <person name="Hikosaka Y."/>
            <person name="Worakitkanchanakul W."/>
            <person name="Sakai H."/>
            <person name="Abe M."/>
            <person name="Konishi M."/>
            <person name="Minamikawa H."/>
            <person name="Kitamoto D."/>
        </authorList>
    </citation>
    <scope>BIOTECHNOLOGY</scope>
</reference>
<reference key="5">
    <citation type="journal article" date="2009" name="Biotechnol. Appl. Biochem.">
        <title>Production of glycolipid biosurfactants by basidiomycetous yeasts.</title>
        <authorList>
            <person name="Morita T."/>
            <person name="Fukuoka T."/>
            <person name="Imura T."/>
            <person name="Kitamoto D."/>
        </authorList>
    </citation>
    <scope>BIOTECHNOLOGY</scope>
</reference>
<reference key="6">
    <citation type="journal article" date="2009" name="Curr. Opin. Colloid Interface Sci.">
        <title>Self-assembling properties of glycolipid biosurfactants and their potential applications.</title>
        <authorList>
            <person name="Kitamoto D."/>
            <person name="Morita T."/>
            <person name="Fukuoka T."/>
            <person name="Konishi M."/>
            <person name="Imura T."/>
        </authorList>
    </citation>
    <scope>BIOTECHNOLOGY</scope>
</reference>
<reference key="7">
    <citation type="journal article" date="2010" name="Yeast">
        <title>Identification of the gene PaEMT1 for biosynthesis of mannosylerythritol lipids in the basidiomycetous yeast Pseudozyma antarctica.</title>
        <authorList>
            <person name="Morita T."/>
            <person name="Ito E."/>
            <person name="Kitamoto H.K."/>
            <person name="Takegawa K."/>
            <person name="Fukuoka T."/>
            <person name="Imura T."/>
            <person name="Kitamoto D."/>
        </authorList>
    </citation>
    <scope>FUNCTION</scope>
</reference>
<reference key="8">
    <citation type="journal article" date="2020" name="PLoS ONE">
        <title>Targeted transcriptomic study of the implication of central metabolic pathways in mannosylerythritol lipids biosynthesis in Pseudozyma antarctica T-34.</title>
        <authorList>
            <person name="Wada K."/>
            <person name="Koike H."/>
            <person name="Fujii T."/>
            <person name="Morita T."/>
        </authorList>
    </citation>
    <scope>FUNCTION</scope>
    <scope>PATHWAY</scope>
</reference>
<feature type="chain" id="PRO_0000449535" description="Acyl-CoA-dependent acyltransferase MAC1">
    <location>
        <begin position="1"/>
        <end position="552"/>
    </location>
</feature>
<dbReference type="EC" id="2.-.-.-" evidence="1"/>
<dbReference type="EMBL" id="DF196785">
    <property type="protein sequence ID" value="GAC75889.1"/>
    <property type="molecule type" value="Genomic_DNA"/>
</dbReference>
<dbReference type="SMR" id="M9LYJ5"/>
<dbReference type="OrthoDB" id="2170at5257"/>
<dbReference type="Proteomes" id="UP000011976">
    <property type="component" value="Unassembled WGS sequence"/>
</dbReference>
<dbReference type="GO" id="GO:0016746">
    <property type="term" value="F:acyltransferase activity"/>
    <property type="evidence" value="ECO:0007669"/>
    <property type="project" value="UniProtKB-KW"/>
</dbReference>
<dbReference type="Gene3D" id="3.30.559.10">
    <property type="entry name" value="Chloramphenicol acetyltransferase-like domain"/>
    <property type="match status" value="1"/>
</dbReference>
<dbReference type="Gene3D" id="3.30.559.30">
    <property type="entry name" value="Nonribosomal peptide synthetase, condensation domain"/>
    <property type="match status" value="1"/>
</dbReference>
<dbReference type="InterPro" id="IPR023213">
    <property type="entry name" value="CAT-like_dom_sf"/>
</dbReference>
<dbReference type="PANTHER" id="PTHR42034:SF2">
    <property type="entry name" value="ACYL-COA-DEPENDENT ACYLTRANSFERASE MAC1"/>
    <property type="match status" value="1"/>
</dbReference>
<dbReference type="PANTHER" id="PTHR42034">
    <property type="entry name" value="CHROMOSOME 7, WHOLE GENOME SHOTGUN SEQUENCE-RELATED"/>
    <property type="match status" value="1"/>
</dbReference>
<keyword id="KW-0012">Acyltransferase</keyword>
<keyword id="KW-1185">Reference proteome</keyword>
<keyword id="KW-0808">Transferase</keyword>
<accession>M9LYJ5</accession>
<comment type="function">
    <text evidence="1 6 7 12 13">Acyl-CoA-dependent acyltransferase; part of the gene cluster that mediates the biosynthesis of mannosylerythritol lipids (MELs), surface-active substances that enhance the availability of water-insoluble substrates (Probable) (PubMed:20564650, PubMed:31923270). Depending on the number of acetyl groups, mannosylerythritol lipids can be differentiated into MEL A (fully acetylated), MEL B and MEL C (monoacetylated at R-6 and R-4, respectively), and the fully deacetylated MEL D (By similarity). The first step in the pathway is the generation of mannosylerythritol by the glycosyltransferase EMT1 which catalyzes the transfer of GDP-mannose to the C-4 atom of meso-erythritol (Probable). This reaction has to be stereospecific, since only mannosyl-D-erythritol is generated (Probable). The produced disaccharide is subsequently acylated with fatty acids of various lengths by the acyltransferases MAC1 and MAC2 at positions C-2 and C-3, repectively (Probable). The existence of MEL derivatives which carry an acetyl group at C-2 implies that at least MAC1 also accepts acetyl-CoA as a donor (Probable). The final step of MEL biosynthesis is the acetylation of the fully acylated mannosylerythritol lipids catalyzed by the acetyl-CoA-dependent acetyltransferase MAT1 (Probable). MAT1 displays a relaxed regioselectivity and is able to transfer acetylgroups to both positions C-4 and C-6 of the mannosyl moiety (Probable).</text>
</comment>
<comment type="pathway">
    <text evidence="13">Secondary metabolite biosynthesis.</text>
</comment>
<comment type="induction">
    <text evidence="7">Expression is induced when cells are grown in cultures containing vegetable oil as the carbon source.</text>
</comment>
<comment type="biotechnology">
    <text evidence="2 3 4 5 8">MELs not only have high potential as eco-friendly biosurfactants due to their excellent surface activity, but also have attracted considerable recent interest because of thei runique properties, including self-assembly, anti-tumor and cell differentiation induction activities, and moisturizing and hair-repairing properties.</text>
</comment>
<comment type="similarity">
    <text evidence="11">Belongs to the trichothecene O-acetyltransferase family.</text>
</comment>
<protein>
    <recommendedName>
        <fullName evidence="9">Acyl-CoA-dependent acyltransferase MAC1</fullName>
        <ecNumber evidence="1">2.-.-.-</ecNumber>
    </recommendedName>
    <alternativeName>
        <fullName evidence="10">Mannosylerythritol lipids (MELs) biosynthesis cluster protein MAC1</fullName>
    </alternativeName>
</protein>
<proteinExistence type="evidence at protein level"/>
<gene>
    <name evidence="9" type="primary">MAC1</name>
    <name type="ORF">PANT_19d00003</name>
</gene>
<organism>
    <name type="scientific">Pseudozyma antarctica (strain T-34)</name>
    <name type="common">Yeast</name>
    <name type="synonym">Candida antarctica</name>
    <dbReference type="NCBI Taxonomy" id="1151754"/>
    <lineage>
        <taxon>Eukaryota</taxon>
        <taxon>Fungi</taxon>
        <taxon>Dikarya</taxon>
        <taxon>Basidiomycota</taxon>
        <taxon>Ustilaginomycotina</taxon>
        <taxon>Ustilaginomycetes</taxon>
        <taxon>Ustilaginales</taxon>
        <taxon>Ustilaginaceae</taxon>
        <taxon>Moesziomyces</taxon>
    </lineage>
</organism>
<name>MAC1_PSEA3</name>